<comment type="function">
    <text evidence="1">Part of the phosphoribosylformylglycinamidine synthase complex involved in the purines biosynthetic pathway. Catalyzes the ATP-dependent conversion of formylglycinamide ribonucleotide (FGAR) and glutamine to yield formylglycinamidine ribonucleotide (FGAM) and glutamate. The FGAM synthase complex is composed of three subunits. PurQ produces an ammonia molecule by converting glutamine to glutamate. PurL transfers the ammonia molecule to FGAR to form FGAM in an ATP-dependent manner. PurS interacts with PurQ and PurL and is thought to assist in the transfer of the ammonia molecule from PurQ to PurL.</text>
</comment>
<comment type="catalytic activity">
    <reaction evidence="1">
        <text>N(2)-formyl-N(1)-(5-phospho-beta-D-ribosyl)glycinamide + L-glutamine + ATP + H2O = 2-formamido-N(1)-(5-O-phospho-beta-D-ribosyl)acetamidine + L-glutamate + ADP + phosphate + H(+)</text>
        <dbReference type="Rhea" id="RHEA:17129"/>
        <dbReference type="ChEBI" id="CHEBI:15377"/>
        <dbReference type="ChEBI" id="CHEBI:15378"/>
        <dbReference type="ChEBI" id="CHEBI:29985"/>
        <dbReference type="ChEBI" id="CHEBI:30616"/>
        <dbReference type="ChEBI" id="CHEBI:43474"/>
        <dbReference type="ChEBI" id="CHEBI:58359"/>
        <dbReference type="ChEBI" id="CHEBI:147286"/>
        <dbReference type="ChEBI" id="CHEBI:147287"/>
        <dbReference type="ChEBI" id="CHEBI:456216"/>
        <dbReference type="EC" id="6.3.5.3"/>
    </reaction>
</comment>
<comment type="pathway">
    <text evidence="1">Purine metabolism; IMP biosynthesis via de novo pathway; 5-amino-1-(5-phospho-D-ribosyl)imidazole from N(2)-formyl-N(1)-(5-phospho-D-ribosyl)glycinamide: step 1/2.</text>
</comment>
<comment type="subunit">
    <text evidence="1">Monomer. Part of the FGAM synthase complex composed of 1 PurL, 1 PurQ and 2 PurS subunits.</text>
</comment>
<comment type="subcellular location">
    <subcellularLocation>
        <location evidence="1">Cytoplasm</location>
    </subcellularLocation>
</comment>
<comment type="similarity">
    <text evidence="1">Belongs to the FGAMS family.</text>
</comment>
<dbReference type="EC" id="6.3.5.3" evidence="1"/>
<dbReference type="EMBL" id="CP000887">
    <property type="protein sequence ID" value="ACD72320.1"/>
    <property type="molecule type" value="Genomic_DNA"/>
</dbReference>
<dbReference type="RefSeq" id="WP_002966777.1">
    <property type="nucleotide sequence ID" value="NC_010742.1"/>
</dbReference>
<dbReference type="SMR" id="B2S573"/>
<dbReference type="GeneID" id="93016781"/>
<dbReference type="KEGG" id="bmc:BAbS19_I07990"/>
<dbReference type="HOGENOM" id="CLU_003100_0_1_5"/>
<dbReference type="UniPathway" id="UPA00074">
    <property type="reaction ID" value="UER00128"/>
</dbReference>
<dbReference type="Proteomes" id="UP000002565">
    <property type="component" value="Chromosome 1"/>
</dbReference>
<dbReference type="GO" id="GO:0005737">
    <property type="term" value="C:cytoplasm"/>
    <property type="evidence" value="ECO:0007669"/>
    <property type="project" value="UniProtKB-SubCell"/>
</dbReference>
<dbReference type="GO" id="GO:0005524">
    <property type="term" value="F:ATP binding"/>
    <property type="evidence" value="ECO:0007669"/>
    <property type="project" value="UniProtKB-UniRule"/>
</dbReference>
<dbReference type="GO" id="GO:0000287">
    <property type="term" value="F:magnesium ion binding"/>
    <property type="evidence" value="ECO:0007669"/>
    <property type="project" value="UniProtKB-UniRule"/>
</dbReference>
<dbReference type="GO" id="GO:0004642">
    <property type="term" value="F:phosphoribosylformylglycinamidine synthase activity"/>
    <property type="evidence" value="ECO:0007669"/>
    <property type="project" value="UniProtKB-UniRule"/>
</dbReference>
<dbReference type="GO" id="GO:0006189">
    <property type="term" value="P:'de novo' IMP biosynthetic process"/>
    <property type="evidence" value="ECO:0007669"/>
    <property type="project" value="UniProtKB-UniRule"/>
</dbReference>
<dbReference type="CDD" id="cd02203">
    <property type="entry name" value="PurL_repeat1"/>
    <property type="match status" value="1"/>
</dbReference>
<dbReference type="CDD" id="cd02204">
    <property type="entry name" value="PurL_repeat2"/>
    <property type="match status" value="1"/>
</dbReference>
<dbReference type="FunFam" id="3.30.1330.10:FF:000004">
    <property type="entry name" value="Phosphoribosylformylglycinamidine synthase subunit PurL"/>
    <property type="match status" value="1"/>
</dbReference>
<dbReference type="Gene3D" id="3.90.650.10">
    <property type="entry name" value="PurM-like C-terminal domain"/>
    <property type="match status" value="2"/>
</dbReference>
<dbReference type="Gene3D" id="3.30.1330.10">
    <property type="entry name" value="PurM-like, N-terminal domain"/>
    <property type="match status" value="2"/>
</dbReference>
<dbReference type="HAMAP" id="MF_00420">
    <property type="entry name" value="PurL_2"/>
    <property type="match status" value="1"/>
</dbReference>
<dbReference type="InterPro" id="IPR010074">
    <property type="entry name" value="PRibForGlyAmidine_synth_PurL"/>
</dbReference>
<dbReference type="InterPro" id="IPR041609">
    <property type="entry name" value="PurL_linker"/>
</dbReference>
<dbReference type="InterPro" id="IPR010918">
    <property type="entry name" value="PurM-like_C_dom"/>
</dbReference>
<dbReference type="InterPro" id="IPR036676">
    <property type="entry name" value="PurM-like_C_sf"/>
</dbReference>
<dbReference type="InterPro" id="IPR016188">
    <property type="entry name" value="PurM-like_N"/>
</dbReference>
<dbReference type="InterPro" id="IPR036921">
    <property type="entry name" value="PurM-like_N_sf"/>
</dbReference>
<dbReference type="NCBIfam" id="TIGR01736">
    <property type="entry name" value="FGAM_synth_II"/>
    <property type="match status" value="1"/>
</dbReference>
<dbReference type="NCBIfam" id="NF002290">
    <property type="entry name" value="PRK01213.1"/>
    <property type="match status" value="1"/>
</dbReference>
<dbReference type="PANTHER" id="PTHR43555">
    <property type="entry name" value="PHOSPHORIBOSYLFORMYLGLYCINAMIDINE SYNTHASE SUBUNIT PURL"/>
    <property type="match status" value="1"/>
</dbReference>
<dbReference type="PANTHER" id="PTHR43555:SF1">
    <property type="entry name" value="PHOSPHORIBOSYLFORMYLGLYCINAMIDINE SYNTHASE SUBUNIT PURL"/>
    <property type="match status" value="1"/>
</dbReference>
<dbReference type="Pfam" id="PF00586">
    <property type="entry name" value="AIRS"/>
    <property type="match status" value="2"/>
</dbReference>
<dbReference type="Pfam" id="PF02769">
    <property type="entry name" value="AIRS_C"/>
    <property type="match status" value="2"/>
</dbReference>
<dbReference type="Pfam" id="PF18072">
    <property type="entry name" value="FGAR-AT_linker"/>
    <property type="match status" value="1"/>
</dbReference>
<dbReference type="PIRSF" id="PIRSF001587">
    <property type="entry name" value="FGAM_synthase_II"/>
    <property type="match status" value="1"/>
</dbReference>
<dbReference type="SUPFAM" id="SSF56042">
    <property type="entry name" value="PurM C-terminal domain-like"/>
    <property type="match status" value="2"/>
</dbReference>
<dbReference type="SUPFAM" id="SSF55326">
    <property type="entry name" value="PurM N-terminal domain-like"/>
    <property type="match status" value="2"/>
</dbReference>
<proteinExistence type="inferred from homology"/>
<keyword id="KW-0067">ATP-binding</keyword>
<keyword id="KW-0963">Cytoplasm</keyword>
<keyword id="KW-0436">Ligase</keyword>
<keyword id="KW-0460">Magnesium</keyword>
<keyword id="KW-0479">Metal-binding</keyword>
<keyword id="KW-0547">Nucleotide-binding</keyword>
<keyword id="KW-0658">Purine biosynthesis</keyword>
<evidence type="ECO:0000255" key="1">
    <source>
        <dbReference type="HAMAP-Rule" id="MF_00420"/>
    </source>
</evidence>
<protein>
    <recommendedName>
        <fullName evidence="1">Phosphoribosylformylglycinamidine synthase subunit PurL</fullName>
        <shortName evidence="1">FGAM synthase</shortName>
        <ecNumber evidence="1">6.3.5.3</ecNumber>
    </recommendedName>
    <alternativeName>
        <fullName evidence="1">Formylglycinamide ribonucleotide amidotransferase subunit II</fullName>
        <shortName evidence="1">FGAR amidotransferase II</shortName>
        <shortName evidence="1">FGAR-AT II</shortName>
    </alternativeName>
    <alternativeName>
        <fullName evidence="1">Glutamine amidotransferase PurL</fullName>
    </alternativeName>
    <alternativeName>
        <fullName evidence="1">Phosphoribosylformylglycinamidine synthase subunit II</fullName>
    </alternativeName>
</protein>
<accession>B2S573</accession>
<sequence>MTISNTRDITPELIEAHGLKPDEYQRILELIGREPTFTELGIFSAMWNEHCSYKSSKKWLRTLPTSGPRVIQGPGENAGVVDIGDGDCVVFKMESHNHPSYIEPYQGAATGVGGILRDVFTMGARPVAAMNALRFGEPDHPKTRHLVSGVVSGVGGYGNAFGVPTVGGEVNFDKRYNGNILVNAFAAGLARHDGIFLSEAEGVGLPVVYLGAKTSRDGVGGATMASAEFDESIEEKRPTVQVGDPFTEKCLLEACLELMASGAVIAIQDMGAAGLTCSAVEMGAKGDLGIELILDHVPVREENMTAYEMMLSESQERMLMVLKPEKEAEAQAIFRKWGLDFAIVGKTTDDLRFRVIHQGEEVANLPIKDLGDEAPEYDRPWMEPGKHAPLPASNVPQVEDYSAALLKLIGSPDLSSRRWVYEQYDTLIQGNSLQVPGGDAGVIRVEGHETKALAFSSDVTPRYCEADPFEGGKQAVAECWRNITATGAEPLASTDNLNFGNPEKPEIMGQLVKAIEGIGEACRALDFPIVSGNVSLYNETNGQAILPTPTIAGVGLLPDWSQMAKIGGMQDGDTLVLLGGDGTHLGQSVYLRDLFDRADGPAPFVDLALEKRNGEFVRSAIRNGQVTACHDLSDGGLAIAVAEMAIKSGKGATLDAGDGLPHALLFGEDQARYVISATPEMAKLIALNAEGAGVPFRILGTVGGDRLKISKNVDVSVADLTQAYEGWFPNFMNGELTGNN</sequence>
<gene>
    <name evidence="1" type="primary">purL</name>
    <name type="ordered locus">BAbS19_I07990</name>
</gene>
<feature type="chain" id="PRO_1000194824" description="Phosphoribosylformylglycinamidine synthase subunit PurL">
    <location>
        <begin position="1"/>
        <end position="740"/>
    </location>
</feature>
<feature type="active site" evidence="1">
    <location>
        <position position="50"/>
    </location>
</feature>
<feature type="active site" description="Proton acceptor" evidence="1">
    <location>
        <position position="96"/>
    </location>
</feature>
<feature type="binding site" evidence="1">
    <location>
        <position position="53"/>
    </location>
    <ligand>
        <name>ATP</name>
        <dbReference type="ChEBI" id="CHEBI:30616"/>
    </ligand>
</feature>
<feature type="binding site" evidence="1">
    <location>
        <position position="92"/>
    </location>
    <ligand>
        <name>ATP</name>
        <dbReference type="ChEBI" id="CHEBI:30616"/>
    </ligand>
</feature>
<feature type="binding site" evidence="1">
    <location>
        <position position="94"/>
    </location>
    <ligand>
        <name>Mg(2+)</name>
        <dbReference type="ChEBI" id="CHEBI:18420"/>
        <label>1</label>
    </ligand>
</feature>
<feature type="binding site" evidence="1">
    <location>
        <begin position="95"/>
        <end position="98"/>
    </location>
    <ligand>
        <name>substrate</name>
    </ligand>
</feature>
<feature type="binding site" evidence="1">
    <location>
        <position position="117"/>
    </location>
    <ligand>
        <name>substrate</name>
    </ligand>
</feature>
<feature type="binding site" evidence="1">
    <location>
        <position position="118"/>
    </location>
    <ligand>
        <name>Mg(2+)</name>
        <dbReference type="ChEBI" id="CHEBI:18420"/>
        <label>2</label>
    </ligand>
</feature>
<feature type="binding site" evidence="1">
    <location>
        <position position="241"/>
    </location>
    <ligand>
        <name>substrate</name>
    </ligand>
</feature>
<feature type="binding site" evidence="1">
    <location>
        <position position="269"/>
    </location>
    <ligand>
        <name>Mg(2+)</name>
        <dbReference type="ChEBI" id="CHEBI:18420"/>
        <label>2</label>
    </ligand>
</feature>
<feature type="binding site" evidence="1">
    <location>
        <begin position="313"/>
        <end position="315"/>
    </location>
    <ligand>
        <name>substrate</name>
    </ligand>
</feature>
<feature type="binding site" evidence="1">
    <location>
        <position position="495"/>
    </location>
    <ligand>
        <name>ATP</name>
        <dbReference type="ChEBI" id="CHEBI:30616"/>
    </ligand>
</feature>
<feature type="binding site" evidence="1">
    <location>
        <position position="532"/>
    </location>
    <ligand>
        <name>ATP</name>
        <dbReference type="ChEBI" id="CHEBI:30616"/>
    </ligand>
</feature>
<feature type="binding site" evidence="1">
    <location>
        <position position="533"/>
    </location>
    <ligand>
        <name>Mg(2+)</name>
        <dbReference type="ChEBI" id="CHEBI:18420"/>
        <label>1</label>
    </ligand>
</feature>
<feature type="binding site" evidence="1">
    <location>
        <position position="535"/>
    </location>
    <ligand>
        <name>substrate</name>
    </ligand>
</feature>
<name>PURL_BRUA1</name>
<organism>
    <name type="scientific">Brucella abortus (strain S19)</name>
    <dbReference type="NCBI Taxonomy" id="430066"/>
    <lineage>
        <taxon>Bacteria</taxon>
        <taxon>Pseudomonadati</taxon>
        <taxon>Pseudomonadota</taxon>
        <taxon>Alphaproteobacteria</taxon>
        <taxon>Hyphomicrobiales</taxon>
        <taxon>Brucellaceae</taxon>
        <taxon>Brucella/Ochrobactrum group</taxon>
        <taxon>Brucella</taxon>
    </lineage>
</organism>
<reference key="1">
    <citation type="journal article" date="2008" name="PLoS ONE">
        <title>Genome sequence of Brucella abortus vaccine strain S19 compared to virulent strains yields candidate virulence genes.</title>
        <authorList>
            <person name="Crasta O.R."/>
            <person name="Folkerts O."/>
            <person name="Fei Z."/>
            <person name="Mane S.P."/>
            <person name="Evans C."/>
            <person name="Martino-Catt S."/>
            <person name="Bricker B."/>
            <person name="Yu G."/>
            <person name="Du L."/>
            <person name="Sobral B.W."/>
        </authorList>
    </citation>
    <scope>NUCLEOTIDE SEQUENCE [LARGE SCALE GENOMIC DNA]</scope>
    <source>
        <strain>S19</strain>
    </source>
</reference>